<feature type="chain" id="PRO_1000014960" description="Chaperone protein HtpG">
    <location>
        <begin position="1"/>
        <end position="637"/>
    </location>
</feature>
<feature type="region of interest" description="A; substrate-binding" evidence="1">
    <location>
        <begin position="1"/>
        <end position="345"/>
    </location>
</feature>
<feature type="region of interest" description="B" evidence="1">
    <location>
        <begin position="346"/>
        <end position="562"/>
    </location>
</feature>
<feature type="region of interest" description="C" evidence="1">
    <location>
        <begin position="563"/>
        <end position="637"/>
    </location>
</feature>
<comment type="function">
    <text evidence="1">Molecular chaperone. Has ATPase activity.</text>
</comment>
<comment type="subunit">
    <text evidence="1">Homodimer.</text>
</comment>
<comment type="subcellular location">
    <subcellularLocation>
        <location evidence="1">Cytoplasm</location>
    </subcellularLocation>
</comment>
<comment type="similarity">
    <text evidence="1">Belongs to the heat shock protein 90 family.</text>
</comment>
<dbReference type="EMBL" id="CP000503">
    <property type="protein sequence ID" value="ABM24546.1"/>
    <property type="molecule type" value="Genomic_DNA"/>
</dbReference>
<dbReference type="RefSeq" id="WP_011789043.1">
    <property type="nucleotide sequence ID" value="NC_008750.1"/>
</dbReference>
<dbReference type="SMR" id="A1RIQ1"/>
<dbReference type="KEGG" id="shw:Sputw3181_1709"/>
<dbReference type="HOGENOM" id="CLU_006684_3_0_6"/>
<dbReference type="Proteomes" id="UP000002597">
    <property type="component" value="Chromosome"/>
</dbReference>
<dbReference type="GO" id="GO:0005737">
    <property type="term" value="C:cytoplasm"/>
    <property type="evidence" value="ECO:0007669"/>
    <property type="project" value="UniProtKB-SubCell"/>
</dbReference>
<dbReference type="GO" id="GO:0005524">
    <property type="term" value="F:ATP binding"/>
    <property type="evidence" value="ECO:0007669"/>
    <property type="project" value="UniProtKB-UniRule"/>
</dbReference>
<dbReference type="GO" id="GO:0016887">
    <property type="term" value="F:ATP hydrolysis activity"/>
    <property type="evidence" value="ECO:0007669"/>
    <property type="project" value="InterPro"/>
</dbReference>
<dbReference type="GO" id="GO:0140662">
    <property type="term" value="F:ATP-dependent protein folding chaperone"/>
    <property type="evidence" value="ECO:0007669"/>
    <property type="project" value="InterPro"/>
</dbReference>
<dbReference type="GO" id="GO:0051082">
    <property type="term" value="F:unfolded protein binding"/>
    <property type="evidence" value="ECO:0007669"/>
    <property type="project" value="UniProtKB-UniRule"/>
</dbReference>
<dbReference type="CDD" id="cd16927">
    <property type="entry name" value="HATPase_Hsp90-like"/>
    <property type="match status" value="1"/>
</dbReference>
<dbReference type="FunFam" id="3.30.230.80:FF:000002">
    <property type="entry name" value="Molecular chaperone HtpG"/>
    <property type="match status" value="1"/>
</dbReference>
<dbReference type="FunFam" id="3.30.565.10:FF:000009">
    <property type="entry name" value="Molecular chaperone HtpG"/>
    <property type="match status" value="1"/>
</dbReference>
<dbReference type="Gene3D" id="3.30.230.80">
    <property type="match status" value="1"/>
</dbReference>
<dbReference type="Gene3D" id="3.40.50.11260">
    <property type="match status" value="1"/>
</dbReference>
<dbReference type="Gene3D" id="1.20.120.790">
    <property type="entry name" value="Heat shock protein 90, C-terminal domain"/>
    <property type="match status" value="1"/>
</dbReference>
<dbReference type="Gene3D" id="3.30.565.10">
    <property type="entry name" value="Histidine kinase-like ATPase, C-terminal domain"/>
    <property type="match status" value="1"/>
</dbReference>
<dbReference type="HAMAP" id="MF_00505">
    <property type="entry name" value="HSP90"/>
    <property type="match status" value="1"/>
</dbReference>
<dbReference type="InterPro" id="IPR036890">
    <property type="entry name" value="HATPase_C_sf"/>
</dbReference>
<dbReference type="InterPro" id="IPR019805">
    <property type="entry name" value="Heat_shock_protein_90_CS"/>
</dbReference>
<dbReference type="InterPro" id="IPR037196">
    <property type="entry name" value="HSP90_C"/>
</dbReference>
<dbReference type="InterPro" id="IPR001404">
    <property type="entry name" value="Hsp90_fam"/>
</dbReference>
<dbReference type="InterPro" id="IPR020575">
    <property type="entry name" value="Hsp90_N"/>
</dbReference>
<dbReference type="InterPro" id="IPR020568">
    <property type="entry name" value="Ribosomal_Su5_D2-typ_SF"/>
</dbReference>
<dbReference type="NCBIfam" id="NF003555">
    <property type="entry name" value="PRK05218.1"/>
    <property type="match status" value="1"/>
</dbReference>
<dbReference type="PANTHER" id="PTHR11528">
    <property type="entry name" value="HEAT SHOCK PROTEIN 90 FAMILY MEMBER"/>
    <property type="match status" value="1"/>
</dbReference>
<dbReference type="Pfam" id="PF13589">
    <property type="entry name" value="HATPase_c_3"/>
    <property type="match status" value="1"/>
</dbReference>
<dbReference type="Pfam" id="PF00183">
    <property type="entry name" value="HSP90"/>
    <property type="match status" value="1"/>
</dbReference>
<dbReference type="PIRSF" id="PIRSF002583">
    <property type="entry name" value="Hsp90"/>
    <property type="match status" value="1"/>
</dbReference>
<dbReference type="PRINTS" id="PR00775">
    <property type="entry name" value="HEATSHOCK90"/>
</dbReference>
<dbReference type="SMART" id="SM00387">
    <property type="entry name" value="HATPase_c"/>
    <property type="match status" value="1"/>
</dbReference>
<dbReference type="SUPFAM" id="SSF55874">
    <property type="entry name" value="ATPase domain of HSP90 chaperone/DNA topoisomerase II/histidine kinase"/>
    <property type="match status" value="1"/>
</dbReference>
<dbReference type="SUPFAM" id="SSF110942">
    <property type="entry name" value="HSP90 C-terminal domain"/>
    <property type="match status" value="1"/>
</dbReference>
<dbReference type="SUPFAM" id="SSF54211">
    <property type="entry name" value="Ribosomal protein S5 domain 2-like"/>
    <property type="match status" value="1"/>
</dbReference>
<dbReference type="PROSITE" id="PS00298">
    <property type="entry name" value="HSP90"/>
    <property type="match status" value="1"/>
</dbReference>
<proteinExistence type="inferred from homology"/>
<gene>
    <name evidence="1" type="primary">htpG</name>
    <name type="ordered locus">Sputw3181_1709</name>
</gene>
<evidence type="ECO:0000255" key="1">
    <source>
        <dbReference type="HAMAP-Rule" id="MF_00505"/>
    </source>
</evidence>
<sequence>MSQQETHGFQTEVKQLLHLMIHSLYSNKEIFLRELVSNAADAADKLRYLALTNDALYEGDGELRVRISADKDKGTVTIEDNGVGMTRDGVIEHLGTIAKSGTAEFFKNLSGEASKDSQLIGQFGVGFYSAFIVAKKVTVRTRAAGHKADEAVLWESEGEGSFTVETITKASRGTEITLHLRDEEKEFADDWRLRSIITKYSDHISVPVEMWQEGTPERDGPDGEKIPATEGYWKVMNKATALWMRNKSEISDEEYQEFYKHISHDYTDALLWSHNRVEGKQEYTNLLYIPSKAPWDLWNRDRKHGLKLFVQRVFIMDDAEQFMPSYLRFVQGLIDSNDLPLNVSREILQDNHITKAMRTGITKRVLGMLEKLAKDDAEKYQQFWAEFGQVLKEGPAEDFANRERIAGLLRFASTHTGSAAPTVSLDDYISRMKEGQTKIYYIVADSYDAAANSPHLELLRKKDIEVLLMSERIDEWLINHLTEYKEKQLHSVTRGELELGELEDAAEKEAQEKLAEESAPLIERIKAALGTKVADVKVTSRLTDTPACVVTGEGEMSTQMIKLMQAAGQPVPEVKPTFEVNPAHPLVSRLNDLQDETAFADWSNLLLQQAQLSEKGSLADPSAFIKLMNQMLLANMK</sequence>
<reference key="1">
    <citation type="submission" date="2006-12" db="EMBL/GenBank/DDBJ databases">
        <title>Complete sequence of Shewanella sp. W3-18-1.</title>
        <authorList>
            <consortium name="US DOE Joint Genome Institute"/>
            <person name="Copeland A."/>
            <person name="Lucas S."/>
            <person name="Lapidus A."/>
            <person name="Barry K."/>
            <person name="Detter J.C."/>
            <person name="Glavina del Rio T."/>
            <person name="Hammon N."/>
            <person name="Israni S."/>
            <person name="Dalin E."/>
            <person name="Tice H."/>
            <person name="Pitluck S."/>
            <person name="Chain P."/>
            <person name="Malfatti S."/>
            <person name="Shin M."/>
            <person name="Vergez L."/>
            <person name="Schmutz J."/>
            <person name="Larimer F."/>
            <person name="Land M."/>
            <person name="Hauser L."/>
            <person name="Kyrpides N."/>
            <person name="Lykidis A."/>
            <person name="Tiedje J."/>
            <person name="Richardson P."/>
        </authorList>
    </citation>
    <scope>NUCLEOTIDE SEQUENCE [LARGE SCALE GENOMIC DNA]</scope>
    <source>
        <strain>W3-18-1</strain>
    </source>
</reference>
<keyword id="KW-0067">ATP-binding</keyword>
<keyword id="KW-0143">Chaperone</keyword>
<keyword id="KW-0963">Cytoplasm</keyword>
<keyword id="KW-0547">Nucleotide-binding</keyword>
<keyword id="KW-0346">Stress response</keyword>
<name>HTPG_SHESW</name>
<protein>
    <recommendedName>
        <fullName evidence="1">Chaperone protein HtpG</fullName>
    </recommendedName>
    <alternativeName>
        <fullName evidence="1">Heat shock protein HtpG</fullName>
    </alternativeName>
    <alternativeName>
        <fullName evidence="1">High temperature protein G</fullName>
    </alternativeName>
</protein>
<accession>A1RIQ1</accession>
<organism>
    <name type="scientific">Shewanella sp. (strain W3-18-1)</name>
    <dbReference type="NCBI Taxonomy" id="351745"/>
    <lineage>
        <taxon>Bacteria</taxon>
        <taxon>Pseudomonadati</taxon>
        <taxon>Pseudomonadota</taxon>
        <taxon>Gammaproteobacteria</taxon>
        <taxon>Alteromonadales</taxon>
        <taxon>Shewanellaceae</taxon>
        <taxon>Shewanella</taxon>
    </lineage>
</organism>